<keyword id="KW-0067">ATP-binding</keyword>
<keyword id="KW-0547">Nucleotide-binding</keyword>
<keyword id="KW-0548">Nucleotidyltransferase</keyword>
<keyword id="KW-0808">Transferase</keyword>
<name>SAT_GEOSW</name>
<protein>
    <recommendedName>
        <fullName evidence="1">Sulfate adenylyltransferase</fullName>
        <ecNumber evidence="1">2.7.7.4</ecNumber>
    </recommendedName>
    <alternativeName>
        <fullName evidence="1">ATP-sulfurylase</fullName>
    </alternativeName>
    <alternativeName>
        <fullName evidence="1">Sulfate adenylate transferase</fullName>
        <shortName evidence="1">SAT</shortName>
    </alternativeName>
</protein>
<accession>C5D5A6</accession>
<organism>
    <name type="scientific">Geobacillus sp. (strain WCH70)</name>
    <dbReference type="NCBI Taxonomy" id="471223"/>
    <lineage>
        <taxon>Bacteria</taxon>
        <taxon>Bacillati</taxon>
        <taxon>Bacillota</taxon>
        <taxon>Bacilli</taxon>
        <taxon>Bacillales</taxon>
        <taxon>Anoxybacillaceae</taxon>
        <taxon>Geobacillus</taxon>
    </lineage>
</organism>
<reference key="1">
    <citation type="submission" date="2009-06" db="EMBL/GenBank/DDBJ databases">
        <title>Complete sequence of chromosome of Geopacillus sp. WCH70.</title>
        <authorList>
            <consortium name="US DOE Joint Genome Institute"/>
            <person name="Lucas S."/>
            <person name="Copeland A."/>
            <person name="Lapidus A."/>
            <person name="Glavina del Rio T."/>
            <person name="Dalin E."/>
            <person name="Tice H."/>
            <person name="Bruce D."/>
            <person name="Goodwin L."/>
            <person name="Pitluck S."/>
            <person name="Chertkov O."/>
            <person name="Brettin T."/>
            <person name="Detter J.C."/>
            <person name="Han C."/>
            <person name="Larimer F."/>
            <person name="Land M."/>
            <person name="Hauser L."/>
            <person name="Kyrpides N."/>
            <person name="Mikhailova N."/>
            <person name="Brumm P."/>
            <person name="Mead D.A."/>
            <person name="Richardson P."/>
        </authorList>
    </citation>
    <scope>NUCLEOTIDE SEQUENCE [LARGE SCALE GENOMIC DNA]</scope>
    <source>
        <strain>WCH70</strain>
    </source>
</reference>
<evidence type="ECO:0000255" key="1">
    <source>
        <dbReference type="HAMAP-Rule" id="MF_00066"/>
    </source>
</evidence>
<proteinExistence type="inferred from homology"/>
<comment type="catalytic activity">
    <reaction evidence="1">
        <text>sulfate + ATP + H(+) = adenosine 5'-phosphosulfate + diphosphate</text>
        <dbReference type="Rhea" id="RHEA:18133"/>
        <dbReference type="ChEBI" id="CHEBI:15378"/>
        <dbReference type="ChEBI" id="CHEBI:16189"/>
        <dbReference type="ChEBI" id="CHEBI:30616"/>
        <dbReference type="ChEBI" id="CHEBI:33019"/>
        <dbReference type="ChEBI" id="CHEBI:58243"/>
        <dbReference type="EC" id="2.7.7.4"/>
    </reaction>
</comment>
<comment type="pathway">
    <text evidence="1">Sulfur metabolism; hydrogen sulfide biosynthesis; sulfite from sulfate: step 1/3.</text>
</comment>
<comment type="similarity">
    <text evidence="1">Belongs to the sulfate adenylyltransferase family.</text>
</comment>
<gene>
    <name evidence="1" type="primary">sat</name>
    <name type="ordered locus">GWCH70_0412</name>
</gene>
<sequence>MSLSIPHGGTLIDRWNPSYPLDTLTKEIELTNAELSDLELIGTGAYSPLTGFLTKEDYDSVVETMRLTNGTVWSIPITLAVTEEKAKEISAGETAKLVYNGEVYGVIDIQEIYQPDKTKEALLVYKTDELKHPGVRKLFEKPNVYVGGPITLVKRTDKGRFAPFYFDPAETRKRFAELGWNTVVGFQTRNPVHRAHEYIQKCALEIVDGLFLNPLVGETKADDIPADIRMESYQVLLENYYPKDRVFLGVFQAAMRYAGPREAIFHAMVRKNFGCTHFIVGRDHAGVGDYYGTYDAQKIFLNFTPEELGITPLFFEHSFYCTKCEGMASTKTCPHDPKYHVVLSGTKVREMLRNGQVPPSTFSRPEVAAVLIKGLQQREAVTSSTR</sequence>
<feature type="chain" id="PRO_1000202414" description="Sulfate adenylyltransferase">
    <location>
        <begin position="1"/>
        <end position="386"/>
    </location>
</feature>
<dbReference type="EC" id="2.7.7.4" evidence="1"/>
<dbReference type="EMBL" id="CP001638">
    <property type="protein sequence ID" value="ACS23332.1"/>
    <property type="molecule type" value="Genomic_DNA"/>
</dbReference>
<dbReference type="SMR" id="C5D5A6"/>
<dbReference type="STRING" id="471223.GWCH70_0412"/>
<dbReference type="KEGG" id="gwc:GWCH70_0412"/>
<dbReference type="eggNOG" id="COG2046">
    <property type="taxonomic scope" value="Bacteria"/>
</dbReference>
<dbReference type="HOGENOM" id="CLU_022950_1_1_9"/>
<dbReference type="OrthoDB" id="9804504at2"/>
<dbReference type="UniPathway" id="UPA00140">
    <property type="reaction ID" value="UER00204"/>
</dbReference>
<dbReference type="GO" id="GO:0005524">
    <property type="term" value="F:ATP binding"/>
    <property type="evidence" value="ECO:0007669"/>
    <property type="project" value="UniProtKB-KW"/>
</dbReference>
<dbReference type="GO" id="GO:0004781">
    <property type="term" value="F:sulfate adenylyltransferase (ATP) activity"/>
    <property type="evidence" value="ECO:0007669"/>
    <property type="project" value="UniProtKB-UniRule"/>
</dbReference>
<dbReference type="GO" id="GO:0070814">
    <property type="term" value="P:hydrogen sulfide biosynthetic process"/>
    <property type="evidence" value="ECO:0007669"/>
    <property type="project" value="UniProtKB-UniRule"/>
</dbReference>
<dbReference type="GO" id="GO:0000103">
    <property type="term" value="P:sulfate assimilation"/>
    <property type="evidence" value="ECO:0007669"/>
    <property type="project" value="UniProtKB-UniRule"/>
</dbReference>
<dbReference type="CDD" id="cd00517">
    <property type="entry name" value="ATPS"/>
    <property type="match status" value="1"/>
</dbReference>
<dbReference type="Gene3D" id="3.40.50.620">
    <property type="entry name" value="HUPs"/>
    <property type="match status" value="1"/>
</dbReference>
<dbReference type="Gene3D" id="3.10.400.10">
    <property type="entry name" value="Sulfate adenylyltransferase"/>
    <property type="match status" value="1"/>
</dbReference>
<dbReference type="HAMAP" id="MF_00066">
    <property type="entry name" value="Sulf_adenylyltr"/>
    <property type="match status" value="1"/>
</dbReference>
<dbReference type="InterPro" id="IPR025980">
    <property type="entry name" value="ATP-Sase_PUA-like_dom"/>
</dbReference>
<dbReference type="InterPro" id="IPR015947">
    <property type="entry name" value="PUA-like_sf"/>
</dbReference>
<dbReference type="InterPro" id="IPR014729">
    <property type="entry name" value="Rossmann-like_a/b/a_fold"/>
</dbReference>
<dbReference type="InterPro" id="IPR020792">
    <property type="entry name" value="SO4_adenylyltransferase_pro"/>
</dbReference>
<dbReference type="InterPro" id="IPR024951">
    <property type="entry name" value="Sulfurylase_cat_dom"/>
</dbReference>
<dbReference type="InterPro" id="IPR002650">
    <property type="entry name" value="Sulphate_adenylyltransferase"/>
</dbReference>
<dbReference type="NCBIfam" id="NF003166">
    <property type="entry name" value="PRK04149.1"/>
    <property type="match status" value="1"/>
</dbReference>
<dbReference type="NCBIfam" id="TIGR00339">
    <property type="entry name" value="sopT"/>
    <property type="match status" value="1"/>
</dbReference>
<dbReference type="PANTHER" id="PTHR43509">
    <property type="match status" value="1"/>
</dbReference>
<dbReference type="PANTHER" id="PTHR43509:SF1">
    <property type="entry name" value="SULFATE ADENYLYLTRANSFERASE"/>
    <property type="match status" value="1"/>
</dbReference>
<dbReference type="Pfam" id="PF01747">
    <property type="entry name" value="ATP-sulfurylase"/>
    <property type="match status" value="1"/>
</dbReference>
<dbReference type="Pfam" id="PF14306">
    <property type="entry name" value="PUA_2"/>
    <property type="match status" value="1"/>
</dbReference>
<dbReference type="SUPFAM" id="SSF52374">
    <property type="entry name" value="Nucleotidylyl transferase"/>
    <property type="match status" value="1"/>
</dbReference>
<dbReference type="SUPFAM" id="SSF88697">
    <property type="entry name" value="PUA domain-like"/>
    <property type="match status" value="1"/>
</dbReference>